<reference key="1">
    <citation type="journal article" date="1991" name="Curr. Genet.">
        <title>Contrasting mutation rates in mitochondrial and nuclear genes of yeasts versus mammals.</title>
        <authorList>
            <person name="Clark-Walker G.D."/>
        </authorList>
    </citation>
    <scope>NUCLEOTIDE SEQUENCE [GENOMIC DNA]</scope>
    <source>
        <strain>ATCC 2001 / BCRC 20586 / JCM 3761 / NBRC 0622 / NRRL Y-65 / CBS 138</strain>
    </source>
</reference>
<reference key="2">
    <citation type="journal article" date="2003" name="FEBS Lett.">
        <title>The complete mitochondrial genome sequence of the pathogenic yeast Candida (Torulopsis) glabrata.</title>
        <authorList>
            <person name="Koszul R."/>
            <person name="Malpertuy A."/>
            <person name="Frangeul L."/>
            <person name="Bouchier C."/>
            <person name="Wincker P."/>
            <person name="Thierry A."/>
            <person name="Duthoy S."/>
            <person name="Ferris S."/>
            <person name="Hennequin C."/>
            <person name="Dujon B."/>
        </authorList>
    </citation>
    <scope>NUCLEOTIDE SEQUENCE [LARGE SCALE GENOMIC DNA]</scope>
    <source>
        <strain>ATCC 2001 / BCRC 20586 / JCM 3761 / NBRC 0622 / NRRL Y-65 / CBS 138</strain>
    </source>
</reference>
<gene>
    <name type="primary">COB</name>
    <name type="synonym">CYB</name>
    <name type="synonym">CYTB</name>
</gene>
<protein>
    <recommendedName>
        <fullName>Cytochrome b</fullName>
    </recommendedName>
    <alternativeName>
        <fullName>Complex III subunit 3</fullName>
    </alternativeName>
    <alternativeName>
        <fullName>Complex III subunit III</fullName>
    </alternativeName>
    <alternativeName>
        <fullName>Cytochrome b-c1 complex subunit 3</fullName>
    </alternativeName>
    <alternativeName>
        <fullName>Ubiquinol-cytochrome-c reductase complex cytochrome b subunit</fullName>
    </alternativeName>
</protein>
<keyword id="KW-0249">Electron transport</keyword>
<keyword id="KW-0349">Heme</keyword>
<keyword id="KW-0408">Iron</keyword>
<keyword id="KW-0472">Membrane</keyword>
<keyword id="KW-0479">Metal-binding</keyword>
<keyword id="KW-0496">Mitochondrion</keyword>
<keyword id="KW-0999">Mitochondrion inner membrane</keyword>
<keyword id="KW-0679">Respiratory chain</keyword>
<keyword id="KW-0812">Transmembrane</keyword>
<keyword id="KW-1133">Transmembrane helix</keyword>
<keyword id="KW-0813">Transport</keyword>
<keyword id="KW-0830">Ubiquinone</keyword>
<proteinExistence type="inferred from homology"/>
<evidence type="ECO:0000250" key="1"/>
<evidence type="ECO:0000250" key="2">
    <source>
        <dbReference type="UniProtKB" id="P00157"/>
    </source>
</evidence>
<evidence type="ECO:0000250" key="3">
    <source>
        <dbReference type="UniProtKB" id="P00163"/>
    </source>
</evidence>
<evidence type="ECO:0000255" key="4">
    <source>
        <dbReference type="PROSITE-ProRule" id="PRU00967"/>
    </source>
</evidence>
<evidence type="ECO:0000255" key="5">
    <source>
        <dbReference type="PROSITE-ProRule" id="PRU00968"/>
    </source>
</evidence>
<evidence type="ECO:0000305" key="6"/>
<accession>Q85QA4</accession>
<accession>Q01178</accession>
<geneLocation type="mitochondrion"/>
<comment type="function">
    <text evidence="3">Component of the ubiquinol-cytochrome c reductase complex (complex III or cytochrome b-c1 complex) that is part of the mitochondrial respiratory chain. The b-c1 complex mediates electron transfer from ubiquinol to cytochrome c. Contributes to the generation of a proton gradient across the mitochondrial membrane that is then used for ATP synthesis.</text>
</comment>
<comment type="cofactor">
    <cofactor evidence="3">
        <name>heme b</name>
        <dbReference type="ChEBI" id="CHEBI:60344"/>
    </cofactor>
    <text evidence="3">Binds 2 heme b groups non-covalently.</text>
</comment>
<comment type="subunit">
    <text evidence="3">Fungal cytochrome b-c1 complex contains 10 subunits; 3 respiratory subunits, 2 core proteins and 5 low-molecular weight proteins. Cytochrome b-c1 complex is a homodimer.</text>
</comment>
<comment type="subcellular location">
    <subcellularLocation>
        <location evidence="3">Mitochondrion inner membrane</location>
        <topology evidence="3">Multi-pass membrane protein</topology>
    </subcellularLocation>
</comment>
<comment type="miscellaneous">
    <text evidence="1">Heme 1 (or BL or b562) is low-potential and absorbs at about 562 nm, and heme 2 (or BH or b566) is high-potential and absorbs at about 566 nm.</text>
</comment>
<comment type="similarity">
    <text evidence="4 5">Belongs to the cytochrome b family.</text>
</comment>
<comment type="caution">
    <text evidence="3">The protein contains only eight transmembrane helices, not nine as predicted by bioinformatics tools.</text>
</comment>
<name>CYB_CANGA</name>
<sequence length="385" mass="43788">MAFRKSNVYLSLVNSYLIDSPQPSTINYWWNLGSLLGLCLVIQILTGIFMAMHYSSNIELAFSSVEHIMRDVQYGWLLRYMHANGASFFFICMYMHIAKGLYYGSYRSPRVTVWIVGVIIFVLTMAAAFLGYCCVYGQMSHWGATVITNLFSAIPFVGQDIVQWLWGGFSVSNPTIQRFFALHYLVPFIIAALVVMHFMALHVHGSSNPLGITGNMDRIGMHGYFIFKDLITVFVFLIFFSLFVFFSPNTLGHPDNYIPGNPLVTPASIVPEWYLLPFYAILRSIPDKLLGVITMFAAILVLLVLPITDRSVVRGNTFKVLSKFFFFLFIFNFLLLGQIGQLHIEPPFVLMGQIATFLYFAYFIIIVPIISTIENVLFYIGRVNN</sequence>
<organism>
    <name type="scientific">Candida glabrata (strain ATCC 2001 / BCRC 20586 / JCM 3761 / NBRC 0622 / NRRL Y-65 / CBS 138)</name>
    <name type="common">Yeast</name>
    <name type="synonym">Nakaseomyces glabratus</name>
    <dbReference type="NCBI Taxonomy" id="284593"/>
    <lineage>
        <taxon>Eukaryota</taxon>
        <taxon>Fungi</taxon>
        <taxon>Dikarya</taxon>
        <taxon>Ascomycota</taxon>
        <taxon>Saccharomycotina</taxon>
        <taxon>Saccharomycetes</taxon>
        <taxon>Saccharomycetales</taxon>
        <taxon>Saccharomycetaceae</taxon>
        <taxon>Nakaseomyces</taxon>
    </lineage>
</organism>
<feature type="chain" id="PRO_0000061740" description="Cytochrome b">
    <location>
        <begin position="1"/>
        <end position="385"/>
    </location>
</feature>
<feature type="transmembrane region" description="Helical" evidence="3">
    <location>
        <begin position="32"/>
        <end position="52"/>
    </location>
</feature>
<feature type="transmembrane region" description="Helical" evidence="3">
    <location>
        <begin position="76"/>
        <end position="98"/>
    </location>
</feature>
<feature type="transmembrane region" description="Helical" evidence="3">
    <location>
        <begin position="113"/>
        <end position="133"/>
    </location>
</feature>
<feature type="transmembrane region" description="Helical" evidence="3">
    <location>
        <begin position="179"/>
        <end position="199"/>
    </location>
</feature>
<feature type="transmembrane region" description="Helical" evidence="3">
    <location>
        <begin position="225"/>
        <end position="245"/>
    </location>
</feature>
<feature type="transmembrane region" description="Helical" evidence="3">
    <location>
        <begin position="289"/>
        <end position="309"/>
    </location>
</feature>
<feature type="transmembrane region" description="Helical" evidence="3">
    <location>
        <begin position="321"/>
        <end position="341"/>
    </location>
</feature>
<feature type="transmembrane region" description="Helical" evidence="3">
    <location>
        <begin position="348"/>
        <end position="368"/>
    </location>
</feature>
<feature type="binding site" description="axial binding residue" evidence="5">
    <location>
        <position position="82"/>
    </location>
    <ligand>
        <name>heme b</name>
        <dbReference type="ChEBI" id="CHEBI:60344"/>
        <label>b562</label>
    </ligand>
    <ligandPart>
        <name>Fe</name>
        <dbReference type="ChEBI" id="CHEBI:18248"/>
    </ligandPart>
</feature>
<feature type="binding site" description="axial binding residue" evidence="5">
    <location>
        <position position="96"/>
    </location>
    <ligand>
        <name>heme b</name>
        <dbReference type="ChEBI" id="CHEBI:60344"/>
        <label>b566</label>
    </ligand>
    <ligandPart>
        <name>Fe</name>
        <dbReference type="ChEBI" id="CHEBI:18248"/>
    </ligandPart>
</feature>
<feature type="binding site" description="axial binding residue" evidence="5">
    <location>
        <position position="183"/>
    </location>
    <ligand>
        <name>heme b</name>
        <dbReference type="ChEBI" id="CHEBI:60344"/>
        <label>b562</label>
    </ligand>
    <ligandPart>
        <name>Fe</name>
        <dbReference type="ChEBI" id="CHEBI:18248"/>
    </ligandPart>
</feature>
<feature type="binding site" description="axial binding residue" evidence="5">
    <location>
        <position position="197"/>
    </location>
    <ligand>
        <name>heme b</name>
        <dbReference type="ChEBI" id="CHEBI:60344"/>
        <label>b566</label>
    </ligand>
    <ligandPart>
        <name>Fe</name>
        <dbReference type="ChEBI" id="CHEBI:18248"/>
    </ligandPart>
</feature>
<feature type="binding site" evidence="2">
    <location>
        <position position="202"/>
    </location>
    <ligand>
        <name>a ubiquinone</name>
        <dbReference type="ChEBI" id="CHEBI:16389"/>
    </ligand>
</feature>
<feature type="sequence conflict" description="In Ref. 1; CAA37855." evidence="6" ref="1">
    <original>A</original>
    <variation>E</variation>
    <location>
        <position position="267"/>
    </location>
</feature>
<feature type="sequence conflict" description="In Ref. 1; CAA37855." evidence="6" ref="1">
    <original>D</original>
    <variation>Y</variation>
    <location>
        <position position="287"/>
    </location>
</feature>
<dbReference type="EMBL" id="X53862">
    <property type="protein sequence ID" value="CAA37855.1"/>
    <property type="status" value="ALT_SEQ"/>
    <property type="molecule type" value="Genomic_DNA"/>
</dbReference>
<dbReference type="EMBL" id="AJ511533">
    <property type="protein sequence ID" value="CAD54418.1"/>
    <property type="molecule type" value="Genomic_DNA"/>
</dbReference>
<dbReference type="RefSeq" id="NP_818777.1">
    <property type="nucleotide sequence ID" value="NC_004691.1"/>
</dbReference>
<dbReference type="SMR" id="Q85QA4"/>
<dbReference type="FunCoup" id="Q85QA4">
    <property type="interactions" value="672"/>
</dbReference>
<dbReference type="STRING" id="284593.Q85QA4"/>
<dbReference type="EnsemblFungi" id="CaglfMp03-T">
    <property type="protein sequence ID" value="CaglfMp03-T-p1"/>
    <property type="gene ID" value="CaglfMp03"/>
</dbReference>
<dbReference type="GeneID" id="807003"/>
<dbReference type="KEGG" id="cgr:807003"/>
<dbReference type="CGD" id="CAL0139466">
    <property type="gene designation" value="cytB"/>
</dbReference>
<dbReference type="VEuPathDB" id="FungiDB:B1J91_Mp03"/>
<dbReference type="VEuPathDB" id="FungiDB:CaglfMp03"/>
<dbReference type="InParanoid" id="Q85QA4"/>
<dbReference type="GO" id="GO:0005743">
    <property type="term" value="C:mitochondrial inner membrane"/>
    <property type="evidence" value="ECO:0007669"/>
    <property type="project" value="UniProtKB-SubCell"/>
</dbReference>
<dbReference type="GO" id="GO:0045275">
    <property type="term" value="C:respiratory chain complex III"/>
    <property type="evidence" value="ECO:0000266"/>
    <property type="project" value="CGD"/>
</dbReference>
<dbReference type="GO" id="GO:0046872">
    <property type="term" value="F:metal ion binding"/>
    <property type="evidence" value="ECO:0007669"/>
    <property type="project" value="UniProtKB-KW"/>
</dbReference>
<dbReference type="GO" id="GO:0008121">
    <property type="term" value="F:ubiquinol-cytochrome-c reductase activity"/>
    <property type="evidence" value="ECO:0007669"/>
    <property type="project" value="InterPro"/>
</dbReference>
<dbReference type="GO" id="GO:0006122">
    <property type="term" value="P:mitochondrial electron transport, ubiquinol to cytochrome c"/>
    <property type="evidence" value="ECO:0000266"/>
    <property type="project" value="CGD"/>
</dbReference>
<dbReference type="CDD" id="cd00290">
    <property type="entry name" value="cytochrome_b_C"/>
    <property type="match status" value="1"/>
</dbReference>
<dbReference type="CDD" id="cd00284">
    <property type="entry name" value="Cytochrome_b_N"/>
    <property type="match status" value="1"/>
</dbReference>
<dbReference type="FunFam" id="1.20.810.10:FF:000002">
    <property type="entry name" value="Cytochrome b"/>
    <property type="match status" value="1"/>
</dbReference>
<dbReference type="Gene3D" id="1.20.810.10">
    <property type="entry name" value="Cytochrome Bc1 Complex, Chain C"/>
    <property type="match status" value="1"/>
</dbReference>
<dbReference type="InterPro" id="IPR005798">
    <property type="entry name" value="Cyt_b/b6_C"/>
</dbReference>
<dbReference type="InterPro" id="IPR036150">
    <property type="entry name" value="Cyt_b/b6_C_sf"/>
</dbReference>
<dbReference type="InterPro" id="IPR005797">
    <property type="entry name" value="Cyt_b/b6_N"/>
</dbReference>
<dbReference type="InterPro" id="IPR027387">
    <property type="entry name" value="Cytb/b6-like_sf"/>
</dbReference>
<dbReference type="InterPro" id="IPR030689">
    <property type="entry name" value="Cytochrome_b"/>
</dbReference>
<dbReference type="InterPro" id="IPR048260">
    <property type="entry name" value="Cytochrome_b_C_euk/bac"/>
</dbReference>
<dbReference type="InterPro" id="IPR048259">
    <property type="entry name" value="Cytochrome_b_N_euk/bac"/>
</dbReference>
<dbReference type="InterPro" id="IPR016174">
    <property type="entry name" value="Di-haem_cyt_TM"/>
</dbReference>
<dbReference type="PANTHER" id="PTHR19271">
    <property type="entry name" value="CYTOCHROME B"/>
    <property type="match status" value="1"/>
</dbReference>
<dbReference type="PANTHER" id="PTHR19271:SF16">
    <property type="entry name" value="CYTOCHROME B"/>
    <property type="match status" value="1"/>
</dbReference>
<dbReference type="Pfam" id="PF00032">
    <property type="entry name" value="Cytochrom_B_C"/>
    <property type="match status" value="1"/>
</dbReference>
<dbReference type="Pfam" id="PF00033">
    <property type="entry name" value="Cytochrome_B"/>
    <property type="match status" value="1"/>
</dbReference>
<dbReference type="PIRSF" id="PIRSF038885">
    <property type="entry name" value="COB"/>
    <property type="match status" value="1"/>
</dbReference>
<dbReference type="SUPFAM" id="SSF81648">
    <property type="entry name" value="a domain/subunit of cytochrome bc1 complex (Ubiquinol-cytochrome c reductase)"/>
    <property type="match status" value="1"/>
</dbReference>
<dbReference type="SUPFAM" id="SSF81342">
    <property type="entry name" value="Transmembrane di-heme cytochromes"/>
    <property type="match status" value="1"/>
</dbReference>
<dbReference type="PROSITE" id="PS51003">
    <property type="entry name" value="CYTB_CTER"/>
    <property type="match status" value="1"/>
</dbReference>
<dbReference type="PROSITE" id="PS51002">
    <property type="entry name" value="CYTB_NTER"/>
    <property type="match status" value="1"/>
</dbReference>